<keyword id="KW-0378">Hydrolase</keyword>
<keyword id="KW-0460">Magnesium</keyword>
<keyword id="KW-0464">Manganese</keyword>
<keyword id="KW-0479">Metal-binding</keyword>
<keyword id="KW-0520">NAD</keyword>
<keyword id="KW-1185">Reference proteome</keyword>
<protein>
    <recommendedName>
        <fullName evidence="1">NAD-capped RNA hydrolase NudC</fullName>
        <shortName evidence="1">DeNADding enzyme NudC</shortName>
        <ecNumber evidence="1">3.6.1.-</ecNumber>
    </recommendedName>
    <alternativeName>
        <fullName evidence="1">NADH pyrophosphatase</fullName>
        <ecNumber evidence="1">3.6.1.22</ecNumber>
    </alternativeName>
</protein>
<accession>Q7TX14</accession>
<accession>A0A1R3Y3E5</accession>
<accession>X2BNP2</accession>
<organism>
    <name type="scientific">Mycobacterium bovis (strain ATCC BAA-935 / AF2122/97)</name>
    <dbReference type="NCBI Taxonomy" id="233413"/>
    <lineage>
        <taxon>Bacteria</taxon>
        <taxon>Bacillati</taxon>
        <taxon>Actinomycetota</taxon>
        <taxon>Actinomycetes</taxon>
        <taxon>Mycobacteriales</taxon>
        <taxon>Mycobacteriaceae</taxon>
        <taxon>Mycobacterium</taxon>
        <taxon>Mycobacterium tuberculosis complex</taxon>
    </lineage>
</organism>
<dbReference type="EC" id="3.6.1.-" evidence="1"/>
<dbReference type="EC" id="3.6.1.22" evidence="1"/>
<dbReference type="EMBL" id="LT708304">
    <property type="protein sequence ID" value="SIU01852.1"/>
    <property type="molecule type" value="Genomic_DNA"/>
</dbReference>
<dbReference type="RefSeq" id="NP_856869.1">
    <property type="nucleotide sequence ID" value="NC_002945.3"/>
</dbReference>
<dbReference type="RefSeq" id="WP_003416829.1">
    <property type="nucleotide sequence ID" value="NC_002945.4"/>
</dbReference>
<dbReference type="SMR" id="Q7TX14"/>
<dbReference type="GeneID" id="45427190"/>
<dbReference type="KEGG" id="mbo:BQ2027_MB3224C"/>
<dbReference type="PATRIC" id="fig|233413.5.peg.3550"/>
<dbReference type="Proteomes" id="UP000001419">
    <property type="component" value="Chromosome"/>
</dbReference>
<dbReference type="GO" id="GO:0005829">
    <property type="term" value="C:cytosol"/>
    <property type="evidence" value="ECO:0007669"/>
    <property type="project" value="TreeGrafter"/>
</dbReference>
<dbReference type="GO" id="GO:0000287">
    <property type="term" value="F:magnesium ion binding"/>
    <property type="evidence" value="ECO:0007669"/>
    <property type="project" value="UniProtKB-UniRule"/>
</dbReference>
<dbReference type="GO" id="GO:0030145">
    <property type="term" value="F:manganese ion binding"/>
    <property type="evidence" value="ECO:0007669"/>
    <property type="project" value="UniProtKB-UniRule"/>
</dbReference>
<dbReference type="GO" id="GO:0000210">
    <property type="term" value="F:NAD+ diphosphatase activity"/>
    <property type="evidence" value="ECO:0007669"/>
    <property type="project" value="UniProtKB-UniRule"/>
</dbReference>
<dbReference type="GO" id="GO:0035529">
    <property type="term" value="F:NADH pyrophosphatase activity"/>
    <property type="evidence" value="ECO:0007669"/>
    <property type="project" value="TreeGrafter"/>
</dbReference>
<dbReference type="GO" id="GO:0110153">
    <property type="term" value="F:RNA NAD-cap (NMN-forming) hydrolase activity"/>
    <property type="evidence" value="ECO:0007669"/>
    <property type="project" value="RHEA"/>
</dbReference>
<dbReference type="GO" id="GO:0019677">
    <property type="term" value="P:NAD catabolic process"/>
    <property type="evidence" value="ECO:0007669"/>
    <property type="project" value="TreeGrafter"/>
</dbReference>
<dbReference type="GO" id="GO:0006734">
    <property type="term" value="P:NADH metabolic process"/>
    <property type="evidence" value="ECO:0007669"/>
    <property type="project" value="TreeGrafter"/>
</dbReference>
<dbReference type="GO" id="GO:0006742">
    <property type="term" value="P:NADP catabolic process"/>
    <property type="evidence" value="ECO:0007669"/>
    <property type="project" value="TreeGrafter"/>
</dbReference>
<dbReference type="CDD" id="cd03429">
    <property type="entry name" value="NUDIX_NADH_pyrophosphatase_Nudt13"/>
    <property type="match status" value="1"/>
</dbReference>
<dbReference type="FunFam" id="3.90.79.10:FF:000048">
    <property type="entry name" value="NADH pyrophosphatase"/>
    <property type="match status" value="1"/>
</dbReference>
<dbReference type="Gene3D" id="3.90.79.20">
    <property type="match status" value="1"/>
</dbReference>
<dbReference type="Gene3D" id="3.90.79.10">
    <property type="entry name" value="Nucleoside Triphosphate Pyrophosphohydrolase"/>
    <property type="match status" value="1"/>
</dbReference>
<dbReference type="HAMAP" id="MF_00297">
    <property type="entry name" value="Nudix_NudC"/>
    <property type="match status" value="1"/>
</dbReference>
<dbReference type="InterPro" id="IPR050241">
    <property type="entry name" value="NAD-cap_RNA_hydrolase_NudC"/>
</dbReference>
<dbReference type="InterPro" id="IPR015375">
    <property type="entry name" value="NADH_PPase-like_N"/>
</dbReference>
<dbReference type="InterPro" id="IPR049734">
    <property type="entry name" value="NudC-like_C"/>
</dbReference>
<dbReference type="InterPro" id="IPR015797">
    <property type="entry name" value="NUDIX_hydrolase-like_dom_sf"/>
</dbReference>
<dbReference type="InterPro" id="IPR020084">
    <property type="entry name" value="NUDIX_hydrolase_CS"/>
</dbReference>
<dbReference type="InterPro" id="IPR000086">
    <property type="entry name" value="NUDIX_hydrolase_dom"/>
</dbReference>
<dbReference type="InterPro" id="IPR022925">
    <property type="entry name" value="RNA_Hydrolase_NudC"/>
</dbReference>
<dbReference type="InterPro" id="IPR015376">
    <property type="entry name" value="Znr_NADH_PPase"/>
</dbReference>
<dbReference type="NCBIfam" id="NF001299">
    <property type="entry name" value="PRK00241.1"/>
    <property type="match status" value="1"/>
</dbReference>
<dbReference type="PANTHER" id="PTHR42904:SF6">
    <property type="entry name" value="NAD-CAPPED RNA HYDROLASE NUDT12"/>
    <property type="match status" value="1"/>
</dbReference>
<dbReference type="PANTHER" id="PTHR42904">
    <property type="entry name" value="NUDIX HYDROLASE, NUDC SUBFAMILY"/>
    <property type="match status" value="1"/>
</dbReference>
<dbReference type="Pfam" id="PF00293">
    <property type="entry name" value="NUDIX"/>
    <property type="match status" value="1"/>
</dbReference>
<dbReference type="Pfam" id="PF09296">
    <property type="entry name" value="NUDIX-like"/>
    <property type="match status" value="1"/>
</dbReference>
<dbReference type="Pfam" id="PF09297">
    <property type="entry name" value="Zn_ribbon_NUD"/>
    <property type="match status" value="1"/>
</dbReference>
<dbReference type="SUPFAM" id="SSF55811">
    <property type="entry name" value="Nudix"/>
    <property type="match status" value="1"/>
</dbReference>
<dbReference type="PROSITE" id="PS51462">
    <property type="entry name" value="NUDIX"/>
    <property type="match status" value="1"/>
</dbReference>
<dbReference type="PROSITE" id="PS00893">
    <property type="entry name" value="NUDIX_BOX"/>
    <property type="match status" value="1"/>
</dbReference>
<name>NUDC_MYCBO</name>
<feature type="chain" id="PRO_0000056969" description="NAD-capped RNA hydrolase NudC">
    <location>
        <begin position="1"/>
        <end position="313"/>
    </location>
</feature>
<feature type="domain" description="Nudix hydrolase" evidence="1">
    <location>
        <begin position="168"/>
        <end position="293"/>
    </location>
</feature>
<feature type="short sequence motif" description="Nudix box" evidence="1">
    <location>
        <begin position="203"/>
        <end position="224"/>
    </location>
</feature>
<feature type="binding site" evidence="1">
    <location>
        <position position="111"/>
    </location>
    <ligand>
        <name>substrate</name>
    </ligand>
</feature>
<feature type="binding site" evidence="1">
    <location>
        <position position="202"/>
    </location>
    <ligand>
        <name>a divalent metal cation</name>
        <dbReference type="ChEBI" id="CHEBI:60240"/>
        <label>1</label>
    </ligand>
</feature>
<feature type="binding site" evidence="1">
    <location>
        <position position="218"/>
    </location>
    <ligand>
        <name>a divalent metal cation</name>
        <dbReference type="ChEBI" id="CHEBI:60240"/>
        <label>2</label>
    </ligand>
</feature>
<feature type="binding site" evidence="1">
    <location>
        <position position="218"/>
    </location>
    <ligand>
        <name>a divalent metal cation</name>
        <dbReference type="ChEBI" id="CHEBI:60240"/>
        <label>3</label>
    </ligand>
</feature>
<feature type="binding site" evidence="1">
    <location>
        <position position="222"/>
    </location>
    <ligand>
        <name>a divalent metal cation</name>
        <dbReference type="ChEBI" id="CHEBI:60240"/>
        <label>1</label>
    </ligand>
</feature>
<feature type="binding site" evidence="1">
    <location>
        <position position="222"/>
    </location>
    <ligand>
        <name>a divalent metal cation</name>
        <dbReference type="ChEBI" id="CHEBI:60240"/>
        <label>3</label>
    </ligand>
</feature>
<feature type="binding site" evidence="1">
    <location>
        <begin position="236"/>
        <end position="243"/>
    </location>
    <ligand>
        <name>substrate</name>
    </ligand>
</feature>
<feature type="binding site" evidence="1">
    <location>
        <position position="264"/>
    </location>
    <ligand>
        <name>a divalent metal cation</name>
        <dbReference type="ChEBI" id="CHEBI:60240"/>
        <label>1</label>
    </ligand>
</feature>
<feature type="binding site" evidence="1">
    <location>
        <position position="264"/>
    </location>
    <ligand>
        <name>a divalent metal cation</name>
        <dbReference type="ChEBI" id="CHEBI:60240"/>
        <label>3</label>
    </ligand>
</feature>
<proteinExistence type="inferred from homology"/>
<evidence type="ECO:0000255" key="1">
    <source>
        <dbReference type="HAMAP-Rule" id="MF_00297"/>
    </source>
</evidence>
<gene>
    <name evidence="1" type="primary">nudC</name>
    <name type="ordered locus">BQ2027_MB3224C</name>
</gene>
<comment type="function">
    <text evidence="1">mRNA decapping enzyme that specifically removes the nicotinamide adenine dinucleotide (NAD) cap from a subset of mRNAs by hydrolyzing the diphosphate linkage to produce nicotinamide mononucleotide (NMN) and 5' monophosphate mRNA. The NAD-cap is present at the 5'-end of some mRNAs and stabilizes RNA against 5'-processing. Has preference for mRNAs with a 5'-end purine. Catalyzes the hydrolysis of a broad range of dinucleotide pyrophosphates.</text>
</comment>
<comment type="catalytic activity">
    <reaction evidence="1">
        <text>a 5'-end NAD(+)-phospho-ribonucleoside in mRNA + H2O = a 5'-end phospho-adenosine-phospho-ribonucleoside in mRNA + beta-nicotinamide D-ribonucleotide + 2 H(+)</text>
        <dbReference type="Rhea" id="RHEA:60876"/>
        <dbReference type="Rhea" id="RHEA-COMP:15698"/>
        <dbReference type="Rhea" id="RHEA-COMP:15719"/>
        <dbReference type="ChEBI" id="CHEBI:14649"/>
        <dbReference type="ChEBI" id="CHEBI:15377"/>
        <dbReference type="ChEBI" id="CHEBI:15378"/>
        <dbReference type="ChEBI" id="CHEBI:144029"/>
        <dbReference type="ChEBI" id="CHEBI:144051"/>
    </reaction>
    <physiologicalReaction direction="left-to-right" evidence="1">
        <dbReference type="Rhea" id="RHEA:60877"/>
    </physiologicalReaction>
</comment>
<comment type="catalytic activity">
    <reaction evidence="1">
        <text>NAD(+) + H2O = beta-nicotinamide D-ribonucleotide + AMP + 2 H(+)</text>
        <dbReference type="Rhea" id="RHEA:11800"/>
        <dbReference type="ChEBI" id="CHEBI:14649"/>
        <dbReference type="ChEBI" id="CHEBI:15377"/>
        <dbReference type="ChEBI" id="CHEBI:15378"/>
        <dbReference type="ChEBI" id="CHEBI:57540"/>
        <dbReference type="ChEBI" id="CHEBI:456215"/>
        <dbReference type="EC" id="3.6.1.22"/>
    </reaction>
</comment>
<comment type="catalytic activity">
    <reaction evidence="1">
        <text>NADH + H2O = reduced beta-nicotinamide D-ribonucleotide + AMP + 2 H(+)</text>
        <dbReference type="Rhea" id="RHEA:48868"/>
        <dbReference type="ChEBI" id="CHEBI:15377"/>
        <dbReference type="ChEBI" id="CHEBI:15378"/>
        <dbReference type="ChEBI" id="CHEBI:57945"/>
        <dbReference type="ChEBI" id="CHEBI:90832"/>
        <dbReference type="ChEBI" id="CHEBI:456215"/>
        <dbReference type="EC" id="3.6.1.22"/>
    </reaction>
</comment>
<comment type="cofactor">
    <cofactor evidence="1">
        <name>Mg(2+)</name>
        <dbReference type="ChEBI" id="CHEBI:18420"/>
    </cofactor>
    <cofactor evidence="1">
        <name>Mn(2+)</name>
        <dbReference type="ChEBI" id="CHEBI:29035"/>
    </cofactor>
    <text evidence="1">Divalent metal cations. Mg(2+) or Mn(2+).</text>
</comment>
<comment type="subunit">
    <text evidence="1">Homodimer.</text>
</comment>
<comment type="similarity">
    <text evidence="1">Belongs to the Nudix hydrolase family. NudC subfamily.</text>
</comment>
<reference key="1">
    <citation type="journal article" date="2003" name="Proc. Natl. Acad. Sci. U.S.A.">
        <title>The complete genome sequence of Mycobacterium bovis.</title>
        <authorList>
            <person name="Garnier T."/>
            <person name="Eiglmeier K."/>
            <person name="Camus J.-C."/>
            <person name="Medina N."/>
            <person name="Mansoor H."/>
            <person name="Pryor M."/>
            <person name="Duthoy S."/>
            <person name="Grondin S."/>
            <person name="Lacroix C."/>
            <person name="Monsempe C."/>
            <person name="Simon S."/>
            <person name="Harris B."/>
            <person name="Atkin R."/>
            <person name="Doggett J."/>
            <person name="Mayes R."/>
            <person name="Keating L."/>
            <person name="Wheeler P.R."/>
            <person name="Parkhill J."/>
            <person name="Barrell B.G."/>
            <person name="Cole S.T."/>
            <person name="Gordon S.V."/>
            <person name="Hewinson R.G."/>
        </authorList>
    </citation>
    <scope>NUCLEOTIDE SEQUENCE [LARGE SCALE GENOMIC DNA]</scope>
    <source>
        <strain>ATCC BAA-935 / AF2122/97</strain>
    </source>
</reference>
<reference key="2">
    <citation type="journal article" date="2017" name="Genome Announc.">
        <title>Updated reference genome sequence and annotation of Mycobacterium bovis AF2122/97.</title>
        <authorList>
            <person name="Malone K.M."/>
            <person name="Farrell D."/>
            <person name="Stuber T.P."/>
            <person name="Schubert O.T."/>
            <person name="Aebersold R."/>
            <person name="Robbe-Austerman S."/>
            <person name="Gordon S.V."/>
        </authorList>
    </citation>
    <scope>NUCLEOTIDE SEQUENCE [LARGE SCALE GENOMIC DNA]</scope>
    <scope>GENOME REANNOTATION</scope>
    <source>
        <strain>ATCC BAA-935 / AF2122/97</strain>
    </source>
</reference>
<sequence>MTNVSGVDFQLRSVPLLSRVGADRADRLRTDMEAAAAGWPGAALLRVDSRNRVLVANGRVLLGAAIELADKPPPEAVFLGRVEGGRHVWAVRAALQPIADPDIPAEAVDLRGLGRIMDDTSSQLVSSASALLNWHDNARFSALDGAPTKPARAGWSRVNPITGHEEFPRIDPAVICLVHDGADRAVLARQAAWPERMFSLLAGFVEAGESFEVCVAREIREEIGLTVRDVRYLGSQPWPFPRSLMVGFHALGDPDEEFSFSDGEIAEAAWFTRDEVRAALAAGDWSSASESKLLLPGSISIARVIIESWAACE</sequence>